<keyword id="KW-0040">ANK repeat</keyword>
<keyword id="KW-0597">Phosphoprotein</keyword>
<keyword id="KW-1267">Proteomics identification</keyword>
<keyword id="KW-1185">Reference proteome</keyword>
<keyword id="KW-0677">Repeat</keyword>
<feature type="chain" id="PRO_0000411002" description="Ankyrin repeat domain-containing protein 63">
    <location>
        <begin position="1"/>
        <end position="380"/>
    </location>
</feature>
<feature type="repeat" description="ANK 1" evidence="2">
    <location>
        <begin position="11"/>
        <end position="40"/>
    </location>
</feature>
<feature type="repeat" description="ANK 2" evidence="2">
    <location>
        <begin position="46"/>
        <end position="79"/>
    </location>
</feature>
<feature type="repeat" description="ANK 3" evidence="2">
    <location>
        <begin position="83"/>
        <end position="112"/>
    </location>
</feature>
<feature type="repeat" description="ANK 4" evidence="2">
    <location>
        <begin position="116"/>
        <end position="145"/>
    </location>
</feature>
<feature type="repeat" description="ANK 5" evidence="2">
    <location>
        <begin position="153"/>
        <end position="182"/>
    </location>
</feature>
<feature type="region of interest" description="Disordered" evidence="3">
    <location>
        <begin position="181"/>
        <end position="256"/>
    </location>
</feature>
<feature type="region of interest" description="Disordered" evidence="3">
    <location>
        <begin position="309"/>
        <end position="368"/>
    </location>
</feature>
<feature type="compositionally biased region" description="Low complexity" evidence="3">
    <location>
        <begin position="181"/>
        <end position="203"/>
    </location>
</feature>
<feature type="compositionally biased region" description="Low complexity" evidence="3">
    <location>
        <begin position="216"/>
        <end position="226"/>
    </location>
</feature>
<feature type="modified residue" description="Phosphoserine" evidence="1">
    <location>
        <position position="193"/>
    </location>
</feature>
<feature type="modified residue" description="Phosphoserine" evidence="1">
    <location>
        <position position="294"/>
    </location>
</feature>
<evidence type="ECO:0000250" key="1">
    <source>
        <dbReference type="UniProtKB" id="A2ARS0"/>
    </source>
</evidence>
<evidence type="ECO:0000255" key="2"/>
<evidence type="ECO:0000256" key="3">
    <source>
        <dbReference type="SAM" id="MobiDB-lite"/>
    </source>
</evidence>
<evidence type="ECO:0000312" key="4">
    <source>
        <dbReference type="HGNC" id="HGNC:40027"/>
    </source>
</evidence>
<protein>
    <recommendedName>
        <fullName evidence="4">Ankyrin repeat domain-containing protein 63</fullName>
    </recommendedName>
</protein>
<name>ANR63_HUMAN</name>
<sequence>MLKPKDLCPRAGTRTFLEAMQAGKVHLARFVLDALDRSIIDCRAEQGRTPLMVAVGLPDPALRARFVRLLLEQGAAVNLRDERGRTALSLACERGHLDAVQLLVQFSGDPEAADSAGNSPVMWAAACGHGAVLEFLVRSFRRLGLRLDRTNRAGLTALQLAAARGHGTCVQALTGPWGRAAAAAAARGSNSDSPPGRPAPAASPEHRRPSPRRLPRPLLARFARAAGGHGGEAGSAGKNSGRHRAQGSERPELGRSMSLALGAVTEEEAARLRAGALMALPNSPQSSGTGRWRSQEVLEGAPPTLAQAPIGLSPHPEGGPGSGRLGLRRRSTAPDIPSLVGEAPGPESGPELEANALSVSVPGPNPWQAGTEAVVLRAQR</sequence>
<dbReference type="EMBL" id="AC020658">
    <property type="status" value="NOT_ANNOTATED_CDS"/>
    <property type="molecule type" value="Genomic_DNA"/>
</dbReference>
<dbReference type="CCDS" id="CCDS53929.1"/>
<dbReference type="RefSeq" id="NP_001177408.1">
    <property type="nucleotide sequence ID" value="NM_001190479.3"/>
</dbReference>
<dbReference type="SMR" id="C9JTQ0"/>
<dbReference type="FunCoup" id="C9JTQ0">
    <property type="interactions" value="1"/>
</dbReference>
<dbReference type="STRING" id="9606.ENSP00000399547"/>
<dbReference type="iPTMnet" id="C9JTQ0"/>
<dbReference type="PhosphoSitePlus" id="C9JTQ0"/>
<dbReference type="BioMuta" id="ANKRD63"/>
<dbReference type="MassIVE" id="C9JTQ0"/>
<dbReference type="PaxDb" id="9606-ENSP00000399547"/>
<dbReference type="PeptideAtlas" id="C9JTQ0"/>
<dbReference type="ProteomicsDB" id="11621"/>
<dbReference type="Pumba" id="C9JTQ0"/>
<dbReference type="Antibodypedia" id="70339">
    <property type="antibodies" value="52 antibodies from 9 providers"/>
</dbReference>
<dbReference type="DNASU" id="100131244"/>
<dbReference type="Ensembl" id="ENST00000434396.2">
    <property type="protein sequence ID" value="ENSP00000399547.1"/>
    <property type="gene ID" value="ENSG00000230778.2"/>
</dbReference>
<dbReference type="GeneID" id="100131244"/>
<dbReference type="KEGG" id="hsa:100131244"/>
<dbReference type="MANE-Select" id="ENST00000434396.2">
    <property type="protein sequence ID" value="ENSP00000399547.1"/>
    <property type="RefSeq nucleotide sequence ID" value="NM_001190479.3"/>
    <property type="RefSeq protein sequence ID" value="NP_001177408.1"/>
</dbReference>
<dbReference type="UCSC" id="uc021sjf.1">
    <property type="organism name" value="human"/>
</dbReference>
<dbReference type="AGR" id="HGNC:40027"/>
<dbReference type="CTD" id="100131244"/>
<dbReference type="GeneCards" id="ANKRD63"/>
<dbReference type="HGNC" id="HGNC:40027">
    <property type="gene designation" value="ANKRD63"/>
</dbReference>
<dbReference type="HPA" id="ENSG00000230778">
    <property type="expression patterns" value="Tissue enriched (brain)"/>
</dbReference>
<dbReference type="neXtProt" id="NX_C9JTQ0"/>
<dbReference type="VEuPathDB" id="HostDB:ENSG00000230778"/>
<dbReference type="eggNOG" id="KOG0504">
    <property type="taxonomic scope" value="Eukaryota"/>
</dbReference>
<dbReference type="GeneTree" id="ENSGT00940000163025"/>
<dbReference type="HOGENOM" id="CLU_042924_0_0_1"/>
<dbReference type="InParanoid" id="C9JTQ0"/>
<dbReference type="OMA" id="QPWQAGT"/>
<dbReference type="OrthoDB" id="5406014at2759"/>
<dbReference type="PAN-GO" id="C9JTQ0">
    <property type="GO annotations" value="0 GO annotations based on evolutionary models"/>
</dbReference>
<dbReference type="PhylomeDB" id="C9JTQ0"/>
<dbReference type="TreeFam" id="TF333311"/>
<dbReference type="PathwayCommons" id="C9JTQ0"/>
<dbReference type="SignaLink" id="C9JTQ0"/>
<dbReference type="BioGRID-ORCS" id="100131244">
    <property type="hits" value="10 hits in 314 CRISPR screens"/>
</dbReference>
<dbReference type="GenomeRNAi" id="100131244"/>
<dbReference type="Pharos" id="C9JTQ0">
    <property type="development level" value="Tdark"/>
</dbReference>
<dbReference type="PRO" id="PR:C9JTQ0"/>
<dbReference type="Proteomes" id="UP000005640">
    <property type="component" value="Chromosome 15"/>
</dbReference>
<dbReference type="RNAct" id="C9JTQ0">
    <property type="molecule type" value="protein"/>
</dbReference>
<dbReference type="Bgee" id="ENSG00000230778">
    <property type="expression patterns" value="Expressed in nucleus accumbens and 27 other cell types or tissues"/>
</dbReference>
<dbReference type="Gene3D" id="1.25.40.20">
    <property type="entry name" value="Ankyrin repeat-containing domain"/>
    <property type="match status" value="1"/>
</dbReference>
<dbReference type="InterPro" id="IPR002110">
    <property type="entry name" value="Ankyrin_rpt"/>
</dbReference>
<dbReference type="InterPro" id="IPR036770">
    <property type="entry name" value="Ankyrin_rpt-contain_sf"/>
</dbReference>
<dbReference type="InterPro" id="IPR050889">
    <property type="entry name" value="Dendritic_Spine_Reg/Scaffold"/>
</dbReference>
<dbReference type="PANTHER" id="PTHR24166:SF30">
    <property type="entry name" value="ANKYRIN REPEAT DOMAIN-CONTAINING PROTEIN 63"/>
    <property type="match status" value="1"/>
</dbReference>
<dbReference type="PANTHER" id="PTHR24166">
    <property type="entry name" value="ROLLING PEBBLES, ISOFORM B"/>
    <property type="match status" value="1"/>
</dbReference>
<dbReference type="Pfam" id="PF12796">
    <property type="entry name" value="Ank_2"/>
    <property type="match status" value="1"/>
</dbReference>
<dbReference type="SMART" id="SM00248">
    <property type="entry name" value="ANK"/>
    <property type="match status" value="3"/>
</dbReference>
<dbReference type="SUPFAM" id="SSF48403">
    <property type="entry name" value="Ankyrin repeat"/>
    <property type="match status" value="1"/>
</dbReference>
<dbReference type="PROSITE" id="PS50297">
    <property type="entry name" value="ANK_REP_REGION"/>
    <property type="match status" value="1"/>
</dbReference>
<dbReference type="PROSITE" id="PS50088">
    <property type="entry name" value="ANK_REPEAT"/>
    <property type="match status" value="2"/>
</dbReference>
<proteinExistence type="evidence at protein level"/>
<accession>C9JTQ0</accession>
<gene>
    <name evidence="4" type="primary">ANKRD63</name>
</gene>
<reference key="1">
    <citation type="journal article" date="2006" name="Nature">
        <title>Analysis of the DNA sequence and duplication history of human chromosome 15.</title>
        <authorList>
            <person name="Zody M.C."/>
            <person name="Garber M."/>
            <person name="Sharpe T."/>
            <person name="Young S.K."/>
            <person name="Rowen L."/>
            <person name="O'Neill K."/>
            <person name="Whittaker C.A."/>
            <person name="Kamal M."/>
            <person name="Chang J.L."/>
            <person name="Cuomo C.A."/>
            <person name="Dewar K."/>
            <person name="FitzGerald M.G."/>
            <person name="Kodira C.D."/>
            <person name="Madan A."/>
            <person name="Qin S."/>
            <person name="Yang X."/>
            <person name="Abbasi N."/>
            <person name="Abouelleil A."/>
            <person name="Arachchi H.M."/>
            <person name="Baradarani L."/>
            <person name="Birditt B."/>
            <person name="Bloom S."/>
            <person name="Bloom T."/>
            <person name="Borowsky M.L."/>
            <person name="Burke J."/>
            <person name="Butler J."/>
            <person name="Cook A."/>
            <person name="DeArellano K."/>
            <person name="DeCaprio D."/>
            <person name="Dorris L. III"/>
            <person name="Dors M."/>
            <person name="Eichler E.E."/>
            <person name="Engels R."/>
            <person name="Fahey J."/>
            <person name="Fleetwood P."/>
            <person name="Friedman C."/>
            <person name="Gearin G."/>
            <person name="Hall J.L."/>
            <person name="Hensley G."/>
            <person name="Johnson E."/>
            <person name="Jones C."/>
            <person name="Kamat A."/>
            <person name="Kaur A."/>
            <person name="Locke D.P."/>
            <person name="Madan A."/>
            <person name="Munson G."/>
            <person name="Jaffe D.B."/>
            <person name="Lui A."/>
            <person name="Macdonald P."/>
            <person name="Mauceli E."/>
            <person name="Naylor J.W."/>
            <person name="Nesbitt R."/>
            <person name="Nicol R."/>
            <person name="O'Leary S.B."/>
            <person name="Ratcliffe A."/>
            <person name="Rounsley S."/>
            <person name="She X."/>
            <person name="Sneddon K.M.B."/>
            <person name="Stewart S."/>
            <person name="Sougnez C."/>
            <person name="Stone S.M."/>
            <person name="Topham K."/>
            <person name="Vincent D."/>
            <person name="Wang S."/>
            <person name="Zimmer A.R."/>
            <person name="Birren B.W."/>
            <person name="Hood L."/>
            <person name="Lander E.S."/>
            <person name="Nusbaum C."/>
        </authorList>
    </citation>
    <scope>NUCLEOTIDE SEQUENCE [LARGE SCALE GENOMIC DNA]</scope>
</reference>
<organism>
    <name type="scientific">Homo sapiens</name>
    <name type="common">Human</name>
    <dbReference type="NCBI Taxonomy" id="9606"/>
    <lineage>
        <taxon>Eukaryota</taxon>
        <taxon>Metazoa</taxon>
        <taxon>Chordata</taxon>
        <taxon>Craniata</taxon>
        <taxon>Vertebrata</taxon>
        <taxon>Euteleostomi</taxon>
        <taxon>Mammalia</taxon>
        <taxon>Eutheria</taxon>
        <taxon>Euarchontoglires</taxon>
        <taxon>Primates</taxon>
        <taxon>Haplorrhini</taxon>
        <taxon>Catarrhini</taxon>
        <taxon>Hominidae</taxon>
        <taxon>Homo</taxon>
    </lineage>
</organism>